<feature type="initiator methionine" description="Removed" evidence="1">
    <location>
        <position position="1"/>
    </location>
</feature>
<feature type="chain" id="PRO_0000389310" description="Small ribosomal subunit protein eS1">
    <location>
        <begin position="2"/>
        <end position="268"/>
    </location>
</feature>
<feature type="region of interest" description="Disordered" evidence="2">
    <location>
        <begin position="1"/>
        <end position="21"/>
    </location>
</feature>
<comment type="function">
    <text evidence="1">Essential for oogenesis; required for late follicle cell development.</text>
</comment>
<comment type="subunit">
    <text evidence="1">Component of the small ribosomal subunit. Mature ribosomes consist of a small (40S) and a large (60S) subunit. The 40S subunit contains about 33 different proteins and 1 molecule of RNA (18S). The 60S subunit contains about 49 different proteins and 3 molecules of RNA (28S, 5.8S and 5S).</text>
</comment>
<comment type="subcellular location">
    <subcellularLocation>
        <location evidence="1">Cytoplasm</location>
    </subcellularLocation>
</comment>
<comment type="similarity">
    <text evidence="1">Belongs to the eukaryotic ribosomal protein eS1 family.</text>
</comment>
<accession>B4H9N7</accession>
<proteinExistence type="inferred from homology"/>
<evidence type="ECO:0000255" key="1">
    <source>
        <dbReference type="HAMAP-Rule" id="MF_03122"/>
    </source>
</evidence>
<evidence type="ECO:0000256" key="2">
    <source>
        <dbReference type="SAM" id="MobiDB-lite"/>
    </source>
</evidence>
<evidence type="ECO:0000305" key="3"/>
<organism>
    <name type="scientific">Drosophila persimilis</name>
    <name type="common">Fruit fly</name>
    <dbReference type="NCBI Taxonomy" id="7234"/>
    <lineage>
        <taxon>Eukaryota</taxon>
        <taxon>Metazoa</taxon>
        <taxon>Ecdysozoa</taxon>
        <taxon>Arthropoda</taxon>
        <taxon>Hexapoda</taxon>
        <taxon>Insecta</taxon>
        <taxon>Pterygota</taxon>
        <taxon>Neoptera</taxon>
        <taxon>Endopterygota</taxon>
        <taxon>Diptera</taxon>
        <taxon>Brachycera</taxon>
        <taxon>Muscomorpha</taxon>
        <taxon>Ephydroidea</taxon>
        <taxon>Drosophilidae</taxon>
        <taxon>Drosophila</taxon>
        <taxon>Sophophora</taxon>
    </lineage>
</organism>
<sequence length="268" mass="30326">MAVGKNKGLSKGGKKGGKKKVVDPFSRKDWYDVKAPNMFQTRQIGKTLVNRTQGQRIASDYLKGRVFEVSLADLQKDIDPERSFRKFRLIAEDVQDRNVLCNFHGMDLTTDKYRSMVKKWQTLIEAIVEAKTVDGYLLRVFCIGFTAKDQQSQRKTCYAQQSQVRKIRARMTDIITNEVSGADLKQLVNKLALDSIAKDIEKSCQRIYPLHDVYIRKVKVLKKPRFDVSKLLELHGDGGGKTTEAVVSAEGAVVDRPEGYEPPVQEAV</sequence>
<reference key="1">
    <citation type="journal article" date="2007" name="Nature">
        <title>Evolution of genes and genomes on the Drosophila phylogeny.</title>
        <authorList>
            <consortium name="Drosophila 12 genomes consortium"/>
        </authorList>
    </citation>
    <scope>NUCLEOTIDE SEQUENCE [LARGE SCALE GENOMIC DNA]</scope>
    <source>
        <strain>MSH-3 / Tucson 14011-0111.49</strain>
    </source>
</reference>
<keyword id="KW-0963">Cytoplasm</keyword>
<keyword id="KW-0217">Developmental protein</keyword>
<keyword id="KW-0221">Differentiation</keyword>
<keyword id="KW-0896">Oogenesis</keyword>
<keyword id="KW-1185">Reference proteome</keyword>
<keyword id="KW-0687">Ribonucleoprotein</keyword>
<keyword id="KW-0689">Ribosomal protein</keyword>
<gene>
    <name evidence="1" type="primary">RpS3A</name>
    <name type="ORF">GL18386</name>
</gene>
<protein>
    <recommendedName>
        <fullName evidence="1">Small ribosomal subunit protein eS1</fullName>
    </recommendedName>
    <alternativeName>
        <fullName evidence="3">40S ribosomal protein S3a</fullName>
    </alternativeName>
</protein>
<name>RS3A_DROPE</name>
<dbReference type="EMBL" id="CH479230">
    <property type="protein sequence ID" value="EDW36521.1"/>
    <property type="molecule type" value="Genomic_DNA"/>
</dbReference>
<dbReference type="SMR" id="B4H9N7"/>
<dbReference type="STRING" id="7234.B4H9N7"/>
<dbReference type="EnsemblMetazoa" id="FBtr0184001">
    <property type="protein sequence ID" value="FBpp0182493"/>
    <property type="gene ID" value="FBgn0155987"/>
</dbReference>
<dbReference type="EnsemblMetazoa" id="XM_002027530.2">
    <property type="protein sequence ID" value="XP_002027566.1"/>
    <property type="gene ID" value="LOC6602537"/>
</dbReference>
<dbReference type="GeneID" id="6602537"/>
<dbReference type="KEGG" id="dpe:6602537"/>
<dbReference type="CTD" id="6189"/>
<dbReference type="eggNOG" id="KOG1628">
    <property type="taxonomic scope" value="Eukaryota"/>
</dbReference>
<dbReference type="HOGENOM" id="CLU_062507_0_1_1"/>
<dbReference type="OMA" id="MCEIITR"/>
<dbReference type="OrthoDB" id="9834376at2759"/>
<dbReference type="PhylomeDB" id="B4H9N7"/>
<dbReference type="ChiTaRS" id="RpS3A">
    <property type="organism name" value="fly"/>
</dbReference>
<dbReference type="Proteomes" id="UP000008744">
    <property type="component" value="Unassembled WGS sequence"/>
</dbReference>
<dbReference type="GO" id="GO:0022627">
    <property type="term" value="C:cytosolic small ribosomal subunit"/>
    <property type="evidence" value="ECO:0007669"/>
    <property type="project" value="UniProtKB-UniRule"/>
</dbReference>
<dbReference type="GO" id="GO:0003735">
    <property type="term" value="F:structural constituent of ribosome"/>
    <property type="evidence" value="ECO:0007669"/>
    <property type="project" value="UniProtKB-UniRule"/>
</dbReference>
<dbReference type="GO" id="GO:0048477">
    <property type="term" value="P:oogenesis"/>
    <property type="evidence" value="ECO:0007669"/>
    <property type="project" value="UniProtKB-KW"/>
</dbReference>
<dbReference type="GO" id="GO:0006412">
    <property type="term" value="P:translation"/>
    <property type="evidence" value="ECO:0007669"/>
    <property type="project" value="UniProtKB-UniRule"/>
</dbReference>
<dbReference type="HAMAP" id="MF_03122">
    <property type="entry name" value="Ribosomal_eS1_euk"/>
    <property type="match status" value="1"/>
</dbReference>
<dbReference type="InterPro" id="IPR001593">
    <property type="entry name" value="Ribosomal_eS1"/>
</dbReference>
<dbReference type="InterPro" id="IPR018281">
    <property type="entry name" value="Ribosomal_eS1_CS"/>
</dbReference>
<dbReference type="InterPro" id="IPR027500">
    <property type="entry name" value="Ribosomal_eS1_euk"/>
</dbReference>
<dbReference type="PANTHER" id="PTHR11830">
    <property type="entry name" value="40S RIBOSOMAL PROTEIN S3A"/>
    <property type="match status" value="1"/>
</dbReference>
<dbReference type="Pfam" id="PF01015">
    <property type="entry name" value="Ribosomal_S3Ae"/>
    <property type="match status" value="1"/>
</dbReference>
<dbReference type="SMART" id="SM01397">
    <property type="entry name" value="Ribosomal_S3Ae"/>
    <property type="match status" value="1"/>
</dbReference>
<dbReference type="PROSITE" id="PS01191">
    <property type="entry name" value="RIBOSOMAL_S3AE"/>
    <property type="match status" value="1"/>
</dbReference>